<proteinExistence type="inferred from homology"/>
<comment type="function">
    <text evidence="1">Catalyzes the hydrolytic deamination of adenosine and 2-deoxyadenosine.</text>
</comment>
<comment type="catalytic activity">
    <reaction evidence="1">
        <text>adenosine + H2O + H(+) = inosine + NH4(+)</text>
        <dbReference type="Rhea" id="RHEA:24408"/>
        <dbReference type="ChEBI" id="CHEBI:15377"/>
        <dbReference type="ChEBI" id="CHEBI:15378"/>
        <dbReference type="ChEBI" id="CHEBI:16335"/>
        <dbReference type="ChEBI" id="CHEBI:17596"/>
        <dbReference type="ChEBI" id="CHEBI:28938"/>
        <dbReference type="EC" id="3.5.4.4"/>
    </reaction>
    <physiologicalReaction direction="left-to-right" evidence="1">
        <dbReference type="Rhea" id="RHEA:24409"/>
    </physiologicalReaction>
</comment>
<comment type="catalytic activity">
    <reaction evidence="1">
        <text>2'-deoxyadenosine + H2O + H(+) = 2'-deoxyinosine + NH4(+)</text>
        <dbReference type="Rhea" id="RHEA:28190"/>
        <dbReference type="ChEBI" id="CHEBI:15377"/>
        <dbReference type="ChEBI" id="CHEBI:15378"/>
        <dbReference type="ChEBI" id="CHEBI:17256"/>
        <dbReference type="ChEBI" id="CHEBI:28938"/>
        <dbReference type="ChEBI" id="CHEBI:28997"/>
        <dbReference type="EC" id="3.5.4.4"/>
    </reaction>
    <physiologicalReaction direction="left-to-right" evidence="1">
        <dbReference type="Rhea" id="RHEA:28191"/>
    </physiologicalReaction>
</comment>
<comment type="cofactor">
    <cofactor evidence="1">
        <name>Zn(2+)</name>
        <dbReference type="ChEBI" id="CHEBI:29105"/>
    </cofactor>
    <text evidence="1">Binds 1 zinc ion per subunit.</text>
</comment>
<comment type="similarity">
    <text evidence="1">Belongs to the metallo-dependent hydrolases superfamily. Adenosine and AMP deaminases family. Adenosine deaminase subfamily.</text>
</comment>
<feature type="chain" id="PRO_1000146578" description="Adenosine deaminase">
    <location>
        <begin position="1"/>
        <end position="334"/>
    </location>
</feature>
<feature type="active site" description="Proton donor" evidence="1">
    <location>
        <position position="200"/>
    </location>
</feature>
<feature type="binding site" evidence="1">
    <location>
        <position position="12"/>
    </location>
    <ligand>
        <name>Zn(2+)</name>
        <dbReference type="ChEBI" id="CHEBI:29105"/>
        <note>catalytic</note>
    </ligand>
</feature>
<feature type="binding site" evidence="1">
    <location>
        <position position="14"/>
    </location>
    <ligand>
        <name>substrate</name>
    </ligand>
</feature>
<feature type="binding site" evidence="1">
    <location>
        <position position="14"/>
    </location>
    <ligand>
        <name>Zn(2+)</name>
        <dbReference type="ChEBI" id="CHEBI:29105"/>
        <note>catalytic</note>
    </ligand>
</feature>
<feature type="binding site" evidence="1">
    <location>
        <position position="16"/>
    </location>
    <ligand>
        <name>substrate</name>
    </ligand>
</feature>
<feature type="binding site" evidence="1">
    <location>
        <position position="170"/>
    </location>
    <ligand>
        <name>substrate</name>
    </ligand>
</feature>
<feature type="binding site" evidence="1">
    <location>
        <position position="197"/>
    </location>
    <ligand>
        <name>Zn(2+)</name>
        <dbReference type="ChEBI" id="CHEBI:29105"/>
        <note>catalytic</note>
    </ligand>
</feature>
<feature type="binding site" evidence="1">
    <location>
        <position position="278"/>
    </location>
    <ligand>
        <name>Zn(2+)</name>
        <dbReference type="ChEBI" id="CHEBI:29105"/>
        <note>catalytic</note>
    </ligand>
</feature>
<feature type="binding site" evidence="1">
    <location>
        <position position="279"/>
    </location>
    <ligand>
        <name>substrate</name>
    </ligand>
</feature>
<feature type="site" description="Important for catalytic activity" evidence="1">
    <location>
        <position position="221"/>
    </location>
</feature>
<name>ADD_VIBCM</name>
<keyword id="KW-0378">Hydrolase</keyword>
<keyword id="KW-0479">Metal-binding</keyword>
<keyword id="KW-0546">Nucleotide metabolism</keyword>
<keyword id="KW-0862">Zinc</keyword>
<reference key="1">
    <citation type="journal article" date="2008" name="PLoS ONE">
        <title>A recalibrated molecular clock and independent origins for the cholera pandemic clones.</title>
        <authorList>
            <person name="Feng L."/>
            <person name="Reeves P.R."/>
            <person name="Lan R."/>
            <person name="Ren Y."/>
            <person name="Gao C."/>
            <person name="Zhou Z."/>
            <person name="Ren Y."/>
            <person name="Cheng J."/>
            <person name="Wang W."/>
            <person name="Wang J."/>
            <person name="Qian W."/>
            <person name="Li D."/>
            <person name="Wang L."/>
        </authorList>
    </citation>
    <scope>NUCLEOTIDE SEQUENCE [LARGE SCALE GENOMIC DNA]</scope>
    <source>
        <strain>M66-2</strain>
    </source>
</reference>
<protein>
    <recommendedName>
        <fullName evidence="1">Adenosine deaminase</fullName>
        <ecNumber evidence="1">3.5.4.4</ecNumber>
    </recommendedName>
    <alternativeName>
        <fullName evidence="1">Adenosine aminohydrolase</fullName>
    </alternativeName>
</protein>
<gene>
    <name evidence="1" type="primary">add</name>
    <name type="ordered locus">VCM66_2671</name>
</gene>
<organism>
    <name type="scientific">Vibrio cholerae serotype O1 (strain M66-2)</name>
    <dbReference type="NCBI Taxonomy" id="579112"/>
    <lineage>
        <taxon>Bacteria</taxon>
        <taxon>Pseudomonadati</taxon>
        <taxon>Pseudomonadota</taxon>
        <taxon>Gammaproteobacteria</taxon>
        <taxon>Vibrionales</taxon>
        <taxon>Vibrionaceae</taxon>
        <taxon>Vibrio</taxon>
    </lineage>
</organism>
<evidence type="ECO:0000255" key="1">
    <source>
        <dbReference type="HAMAP-Rule" id="MF_00540"/>
    </source>
</evidence>
<accession>C3LSH8</accession>
<sequence length="334" mass="36405">MITSSLPLTDLHRHLDGNIRTQTILELGQKFGVKLPANTLQTLTPYVQIVEAEPSLVAFLSKLDWGVAVLGDLDACRRVAYENVEDALNARIDYAELRFSPYYMAMKHSLPVTGVVEAVVDGVRAGVRDFGIQANLIGIMSRTFGTDACQQELDAILSQKNHIVAVDLAGDELGQPGDRFIQHFKQVRDAGLHVTVHAGEAAGPESMWQAIRDLGATRIGHGVKAIHDPKLMDYLAQHRIGIESCLTSNLQTSTVDSLATHPLKRFLEHGILACINTDDPAVEGIELPYEYEVAAPQAGLSQEQIRQAQLNGLELAFLSDSEKKALLAKAALRG</sequence>
<dbReference type="EC" id="3.5.4.4" evidence="1"/>
<dbReference type="EMBL" id="CP001233">
    <property type="protein sequence ID" value="ACP06965.1"/>
    <property type="molecule type" value="Genomic_DNA"/>
</dbReference>
<dbReference type="RefSeq" id="WP_000633281.1">
    <property type="nucleotide sequence ID" value="NC_012578.1"/>
</dbReference>
<dbReference type="SMR" id="C3LSH8"/>
<dbReference type="KEGG" id="vcm:VCM66_2671"/>
<dbReference type="HOGENOM" id="CLU_039228_0_2_6"/>
<dbReference type="Proteomes" id="UP000001217">
    <property type="component" value="Chromosome I"/>
</dbReference>
<dbReference type="GO" id="GO:0005829">
    <property type="term" value="C:cytosol"/>
    <property type="evidence" value="ECO:0007669"/>
    <property type="project" value="TreeGrafter"/>
</dbReference>
<dbReference type="GO" id="GO:0046936">
    <property type="term" value="F:2'-deoxyadenosine deaminase activity"/>
    <property type="evidence" value="ECO:0007669"/>
    <property type="project" value="RHEA"/>
</dbReference>
<dbReference type="GO" id="GO:0004000">
    <property type="term" value="F:adenosine deaminase activity"/>
    <property type="evidence" value="ECO:0007669"/>
    <property type="project" value="UniProtKB-UniRule"/>
</dbReference>
<dbReference type="GO" id="GO:0008270">
    <property type="term" value="F:zinc ion binding"/>
    <property type="evidence" value="ECO:0007669"/>
    <property type="project" value="UniProtKB-UniRule"/>
</dbReference>
<dbReference type="GO" id="GO:0006154">
    <property type="term" value="P:adenosine catabolic process"/>
    <property type="evidence" value="ECO:0007669"/>
    <property type="project" value="TreeGrafter"/>
</dbReference>
<dbReference type="GO" id="GO:0043103">
    <property type="term" value="P:hypoxanthine salvage"/>
    <property type="evidence" value="ECO:0007669"/>
    <property type="project" value="TreeGrafter"/>
</dbReference>
<dbReference type="GO" id="GO:0046103">
    <property type="term" value="P:inosine biosynthetic process"/>
    <property type="evidence" value="ECO:0007669"/>
    <property type="project" value="TreeGrafter"/>
</dbReference>
<dbReference type="GO" id="GO:0009117">
    <property type="term" value="P:nucleotide metabolic process"/>
    <property type="evidence" value="ECO:0007669"/>
    <property type="project" value="UniProtKB-KW"/>
</dbReference>
<dbReference type="GO" id="GO:0009168">
    <property type="term" value="P:purine ribonucleoside monophosphate biosynthetic process"/>
    <property type="evidence" value="ECO:0007669"/>
    <property type="project" value="UniProtKB-UniRule"/>
</dbReference>
<dbReference type="FunFam" id="3.20.20.140:FF:000009">
    <property type="entry name" value="Adenosine deaminase"/>
    <property type="match status" value="1"/>
</dbReference>
<dbReference type="Gene3D" id="3.20.20.140">
    <property type="entry name" value="Metal-dependent hydrolases"/>
    <property type="match status" value="1"/>
</dbReference>
<dbReference type="HAMAP" id="MF_00540">
    <property type="entry name" value="A_deaminase"/>
    <property type="match status" value="1"/>
</dbReference>
<dbReference type="InterPro" id="IPR028893">
    <property type="entry name" value="A_deaminase"/>
</dbReference>
<dbReference type="InterPro" id="IPR001365">
    <property type="entry name" value="A_deaminase_dom"/>
</dbReference>
<dbReference type="InterPro" id="IPR006330">
    <property type="entry name" value="Ado/ade_deaminase"/>
</dbReference>
<dbReference type="InterPro" id="IPR032466">
    <property type="entry name" value="Metal_Hydrolase"/>
</dbReference>
<dbReference type="NCBIfam" id="TIGR01430">
    <property type="entry name" value="aden_deam"/>
    <property type="match status" value="1"/>
</dbReference>
<dbReference type="NCBIfam" id="NF006846">
    <property type="entry name" value="PRK09358.1-1"/>
    <property type="match status" value="1"/>
</dbReference>
<dbReference type="PANTHER" id="PTHR11409">
    <property type="entry name" value="ADENOSINE DEAMINASE"/>
    <property type="match status" value="1"/>
</dbReference>
<dbReference type="PANTHER" id="PTHR11409:SF43">
    <property type="entry name" value="ADENOSINE DEAMINASE"/>
    <property type="match status" value="1"/>
</dbReference>
<dbReference type="Pfam" id="PF00962">
    <property type="entry name" value="A_deaminase"/>
    <property type="match status" value="1"/>
</dbReference>
<dbReference type="SUPFAM" id="SSF51556">
    <property type="entry name" value="Metallo-dependent hydrolases"/>
    <property type="match status" value="1"/>
</dbReference>